<comment type="similarity">
    <text evidence="1">Belongs to the bacterial ribosomal protein bL27 family.</text>
</comment>
<evidence type="ECO:0000305" key="1"/>
<reference key="1">
    <citation type="journal article" date="1999" name="Nature">
        <title>Evidence for lateral gene transfer between Archaea and Bacteria from genome sequence of Thermotoga maritima.</title>
        <authorList>
            <person name="Nelson K.E."/>
            <person name="Clayton R.A."/>
            <person name="Gill S.R."/>
            <person name="Gwinn M.L."/>
            <person name="Dodson R.J."/>
            <person name="Haft D.H."/>
            <person name="Hickey E.K."/>
            <person name="Peterson J.D."/>
            <person name="Nelson W.C."/>
            <person name="Ketchum K.A."/>
            <person name="McDonald L.A."/>
            <person name="Utterback T.R."/>
            <person name="Malek J.A."/>
            <person name="Linher K.D."/>
            <person name="Garrett M.M."/>
            <person name="Stewart A.M."/>
            <person name="Cotton M.D."/>
            <person name="Pratt M.S."/>
            <person name="Phillips C.A."/>
            <person name="Richardson D.L."/>
            <person name="Heidelberg J.F."/>
            <person name="Sutton G.G."/>
            <person name="Fleischmann R.D."/>
            <person name="Eisen J.A."/>
            <person name="White O."/>
            <person name="Salzberg S.L."/>
            <person name="Smith H.O."/>
            <person name="Venter J.C."/>
            <person name="Fraser C.M."/>
        </authorList>
    </citation>
    <scope>NUCLEOTIDE SEQUENCE [LARGE SCALE GENOMIC DNA]</scope>
    <source>
        <strain>ATCC 43589 / DSM 3109 / JCM 10099 / NBRC 100826 / MSB8</strain>
    </source>
</reference>
<gene>
    <name type="primary">rpmA</name>
    <name type="ordered locus">TM_1456</name>
</gene>
<protein>
    <recommendedName>
        <fullName evidence="1">Large ribosomal subunit protein bL27</fullName>
    </recommendedName>
    <alternativeName>
        <fullName>50S ribosomal protein L27</fullName>
    </alternativeName>
</protein>
<accession>Q9X1G7</accession>
<organism>
    <name type="scientific">Thermotoga maritima (strain ATCC 43589 / DSM 3109 / JCM 10099 / NBRC 100826 / MSB8)</name>
    <dbReference type="NCBI Taxonomy" id="243274"/>
    <lineage>
        <taxon>Bacteria</taxon>
        <taxon>Thermotogati</taxon>
        <taxon>Thermotogota</taxon>
        <taxon>Thermotogae</taxon>
        <taxon>Thermotogales</taxon>
        <taxon>Thermotogaceae</taxon>
        <taxon>Thermotoga</taxon>
    </lineage>
</organism>
<dbReference type="EMBL" id="AE000512">
    <property type="protein sequence ID" value="AAD36524.1"/>
    <property type="molecule type" value="Genomic_DNA"/>
</dbReference>
<dbReference type="PIR" id="A72251">
    <property type="entry name" value="A72251"/>
</dbReference>
<dbReference type="RefSeq" id="NP_229255.1">
    <property type="nucleotide sequence ID" value="NC_000853.1"/>
</dbReference>
<dbReference type="RefSeq" id="WP_004081742.1">
    <property type="nucleotide sequence ID" value="NZ_CP011107.1"/>
</dbReference>
<dbReference type="SMR" id="Q9X1G7"/>
<dbReference type="FunCoup" id="Q9X1G7">
    <property type="interactions" value="341"/>
</dbReference>
<dbReference type="STRING" id="243274.TM_1456"/>
<dbReference type="PaxDb" id="243274-THEMA_07035"/>
<dbReference type="EnsemblBacteria" id="AAD36524">
    <property type="protein sequence ID" value="AAD36524"/>
    <property type="gene ID" value="TM_1456"/>
</dbReference>
<dbReference type="KEGG" id="tma:TM1456"/>
<dbReference type="KEGG" id="tmi:THEMA_07035"/>
<dbReference type="KEGG" id="tmm:Tmari_1462"/>
<dbReference type="KEGG" id="tmw:THMA_1486"/>
<dbReference type="eggNOG" id="COG0211">
    <property type="taxonomic scope" value="Bacteria"/>
</dbReference>
<dbReference type="InParanoid" id="Q9X1G7"/>
<dbReference type="OrthoDB" id="9803474at2"/>
<dbReference type="Proteomes" id="UP000008183">
    <property type="component" value="Chromosome"/>
</dbReference>
<dbReference type="GO" id="GO:0022625">
    <property type="term" value="C:cytosolic large ribosomal subunit"/>
    <property type="evidence" value="ECO:0000318"/>
    <property type="project" value="GO_Central"/>
</dbReference>
<dbReference type="GO" id="GO:0003735">
    <property type="term" value="F:structural constituent of ribosome"/>
    <property type="evidence" value="ECO:0000318"/>
    <property type="project" value="GO_Central"/>
</dbReference>
<dbReference type="GO" id="GO:0006412">
    <property type="term" value="P:translation"/>
    <property type="evidence" value="ECO:0007669"/>
    <property type="project" value="UniProtKB-UniRule"/>
</dbReference>
<dbReference type="FunFam" id="2.40.50.100:FF:000085">
    <property type="entry name" value="50S ribosomal protein L27"/>
    <property type="match status" value="1"/>
</dbReference>
<dbReference type="Gene3D" id="2.40.50.100">
    <property type="match status" value="1"/>
</dbReference>
<dbReference type="HAMAP" id="MF_00539">
    <property type="entry name" value="Ribosomal_bL27"/>
    <property type="match status" value="1"/>
</dbReference>
<dbReference type="InterPro" id="IPR001684">
    <property type="entry name" value="Ribosomal_bL27"/>
</dbReference>
<dbReference type="InterPro" id="IPR018261">
    <property type="entry name" value="Ribosomal_bL27_CS"/>
</dbReference>
<dbReference type="NCBIfam" id="TIGR00062">
    <property type="entry name" value="L27"/>
    <property type="match status" value="1"/>
</dbReference>
<dbReference type="PANTHER" id="PTHR15893:SF0">
    <property type="entry name" value="LARGE RIBOSOMAL SUBUNIT PROTEIN BL27M"/>
    <property type="match status" value="1"/>
</dbReference>
<dbReference type="PANTHER" id="PTHR15893">
    <property type="entry name" value="RIBOSOMAL PROTEIN L27"/>
    <property type="match status" value="1"/>
</dbReference>
<dbReference type="Pfam" id="PF01016">
    <property type="entry name" value="Ribosomal_L27"/>
    <property type="match status" value="1"/>
</dbReference>
<dbReference type="PRINTS" id="PR00063">
    <property type="entry name" value="RIBOSOMALL27"/>
</dbReference>
<dbReference type="SUPFAM" id="SSF110324">
    <property type="entry name" value="Ribosomal L27 protein-like"/>
    <property type="match status" value="1"/>
</dbReference>
<dbReference type="PROSITE" id="PS00831">
    <property type="entry name" value="RIBOSOMAL_L27"/>
    <property type="match status" value="1"/>
</dbReference>
<proteinExistence type="inferred from homology"/>
<sequence length="83" mass="9221">MAHKKSGGVAKNGRDSLPKYLGVKVGDGQIVKAGNILVRQRGTRFYPGKNVGMGRDFTLFALKDGRVKFETKNNKKYVSVYEE</sequence>
<feature type="chain" id="PRO_0000181192" description="Large ribosomal subunit protein bL27">
    <location>
        <begin position="1"/>
        <end position="83"/>
    </location>
</feature>
<keyword id="KW-1185">Reference proteome</keyword>
<keyword id="KW-0687">Ribonucleoprotein</keyword>
<keyword id="KW-0689">Ribosomal protein</keyword>
<name>RL27_THEMA</name>